<sequence length="318" mass="35147">MPNTLEQFKSITTIVADTGDIEAIKRYQPEDATTNPSLILKAAQIPDYAHLIENAIEWAKSQSDSIEQQVEDAGDKLAVNIGVEILKIVPGRISTEVDARLSFDKAGSITKAHKLIKLYKEAGIDKSRILIKLASTWEGICAAKELEQEGINCNLTLLFSFAQARACAEAGVYLISPFVGRILDWYKKDTGLEYSSVEDPGVVSVTEIYNYYKRHGFNTVVMGASFRNTGEIIELAGCDRLTIGPALLEELANSQTEVVRKLIPTETVVDAADPLTEAQFRWEFNEDPMAVEKLAEGIRNFAIDQGKLEVMLKEKLAC</sequence>
<keyword id="KW-0963">Cytoplasm</keyword>
<keyword id="KW-0570">Pentose shunt</keyword>
<keyword id="KW-1185">Reference proteome</keyword>
<keyword id="KW-0704">Schiff base</keyword>
<keyword id="KW-0808">Transferase</keyword>
<comment type="function">
    <text evidence="2">Transaldolase is important for the balance of metabolites in the pentose-phosphate pathway.</text>
</comment>
<comment type="catalytic activity">
    <reaction evidence="2">
        <text>D-sedoheptulose 7-phosphate + D-glyceraldehyde 3-phosphate = D-erythrose 4-phosphate + beta-D-fructose 6-phosphate</text>
        <dbReference type="Rhea" id="RHEA:17053"/>
        <dbReference type="ChEBI" id="CHEBI:16897"/>
        <dbReference type="ChEBI" id="CHEBI:57483"/>
        <dbReference type="ChEBI" id="CHEBI:57634"/>
        <dbReference type="ChEBI" id="CHEBI:59776"/>
        <dbReference type="EC" id="2.2.1.2"/>
    </reaction>
</comment>
<comment type="pathway">
    <text evidence="2">Carbohydrate degradation; pentose phosphate pathway; D-glyceraldehyde 3-phosphate and beta-D-fructose 6-phosphate from D-ribose 5-phosphate and D-xylulose 5-phosphate (non-oxidative stage): step 2/3.</text>
</comment>
<comment type="subunit">
    <text evidence="1">Homodimer.</text>
</comment>
<comment type="subcellular location">
    <subcellularLocation>
        <location evidence="2">Cytoplasm</location>
    </subcellularLocation>
</comment>
<comment type="similarity">
    <text evidence="2">Belongs to the transaldolase family. Type 1 subfamily.</text>
</comment>
<evidence type="ECO:0000250" key="1"/>
<evidence type="ECO:0000255" key="2">
    <source>
        <dbReference type="HAMAP-Rule" id="MF_00492"/>
    </source>
</evidence>
<accession>A8FSH3</accession>
<protein>
    <recommendedName>
        <fullName evidence="2">Transaldolase</fullName>
        <ecNumber evidence="2">2.2.1.2</ecNumber>
    </recommendedName>
</protein>
<proteinExistence type="inferred from homology"/>
<reference key="1">
    <citation type="submission" date="2007-08" db="EMBL/GenBank/DDBJ databases">
        <title>Complete sequence of Shewanella sediminis HAW-EB3.</title>
        <authorList>
            <consortium name="US DOE Joint Genome Institute"/>
            <person name="Copeland A."/>
            <person name="Lucas S."/>
            <person name="Lapidus A."/>
            <person name="Barry K."/>
            <person name="Glavina del Rio T."/>
            <person name="Dalin E."/>
            <person name="Tice H."/>
            <person name="Pitluck S."/>
            <person name="Chertkov O."/>
            <person name="Brettin T."/>
            <person name="Bruce D."/>
            <person name="Detter J.C."/>
            <person name="Han C."/>
            <person name="Schmutz J."/>
            <person name="Larimer F."/>
            <person name="Land M."/>
            <person name="Hauser L."/>
            <person name="Kyrpides N."/>
            <person name="Kim E."/>
            <person name="Zhao J.-S."/>
            <person name="Richardson P."/>
        </authorList>
    </citation>
    <scope>NUCLEOTIDE SEQUENCE [LARGE SCALE GENOMIC DNA]</scope>
    <source>
        <strain>HAW-EB3</strain>
    </source>
</reference>
<feature type="chain" id="PRO_1000081401" description="Transaldolase">
    <location>
        <begin position="1"/>
        <end position="318"/>
    </location>
</feature>
<feature type="active site" description="Schiff-base intermediate with substrate" evidence="2">
    <location>
        <position position="132"/>
    </location>
</feature>
<organism>
    <name type="scientific">Shewanella sediminis (strain HAW-EB3)</name>
    <dbReference type="NCBI Taxonomy" id="425104"/>
    <lineage>
        <taxon>Bacteria</taxon>
        <taxon>Pseudomonadati</taxon>
        <taxon>Pseudomonadota</taxon>
        <taxon>Gammaproteobacteria</taxon>
        <taxon>Alteromonadales</taxon>
        <taxon>Shewanellaceae</taxon>
        <taxon>Shewanella</taxon>
    </lineage>
</organism>
<gene>
    <name evidence="2" type="primary">tal</name>
    <name type="ordered locus">Ssed_1185</name>
</gene>
<name>TAL_SHESH</name>
<dbReference type="EC" id="2.2.1.2" evidence="2"/>
<dbReference type="EMBL" id="CP000821">
    <property type="protein sequence ID" value="ABV35796.1"/>
    <property type="molecule type" value="Genomic_DNA"/>
</dbReference>
<dbReference type="RefSeq" id="WP_012141532.1">
    <property type="nucleotide sequence ID" value="NC_009831.1"/>
</dbReference>
<dbReference type="SMR" id="A8FSH3"/>
<dbReference type="STRING" id="425104.Ssed_1185"/>
<dbReference type="KEGG" id="sse:Ssed_1185"/>
<dbReference type="eggNOG" id="COG0176">
    <property type="taxonomic scope" value="Bacteria"/>
</dbReference>
<dbReference type="HOGENOM" id="CLU_047470_0_1_6"/>
<dbReference type="OrthoDB" id="9809101at2"/>
<dbReference type="UniPathway" id="UPA00115">
    <property type="reaction ID" value="UER00414"/>
</dbReference>
<dbReference type="Proteomes" id="UP000002015">
    <property type="component" value="Chromosome"/>
</dbReference>
<dbReference type="GO" id="GO:0005829">
    <property type="term" value="C:cytosol"/>
    <property type="evidence" value="ECO:0007669"/>
    <property type="project" value="TreeGrafter"/>
</dbReference>
<dbReference type="GO" id="GO:0004801">
    <property type="term" value="F:transaldolase activity"/>
    <property type="evidence" value="ECO:0000250"/>
    <property type="project" value="UniProtKB"/>
</dbReference>
<dbReference type="GO" id="GO:0005975">
    <property type="term" value="P:carbohydrate metabolic process"/>
    <property type="evidence" value="ECO:0007669"/>
    <property type="project" value="InterPro"/>
</dbReference>
<dbReference type="GO" id="GO:0006098">
    <property type="term" value="P:pentose-phosphate shunt"/>
    <property type="evidence" value="ECO:0007669"/>
    <property type="project" value="UniProtKB-UniRule"/>
</dbReference>
<dbReference type="CDD" id="cd00957">
    <property type="entry name" value="Transaldolase_TalAB"/>
    <property type="match status" value="1"/>
</dbReference>
<dbReference type="FunFam" id="3.20.20.70:FF:000002">
    <property type="entry name" value="Transaldolase"/>
    <property type="match status" value="1"/>
</dbReference>
<dbReference type="Gene3D" id="3.20.20.70">
    <property type="entry name" value="Aldolase class I"/>
    <property type="match status" value="1"/>
</dbReference>
<dbReference type="HAMAP" id="MF_00492">
    <property type="entry name" value="Transaldolase_1"/>
    <property type="match status" value="1"/>
</dbReference>
<dbReference type="InterPro" id="IPR013785">
    <property type="entry name" value="Aldolase_TIM"/>
</dbReference>
<dbReference type="InterPro" id="IPR001585">
    <property type="entry name" value="TAL/FSA"/>
</dbReference>
<dbReference type="InterPro" id="IPR004730">
    <property type="entry name" value="Transaldolase_1"/>
</dbReference>
<dbReference type="InterPro" id="IPR018225">
    <property type="entry name" value="Transaldolase_AS"/>
</dbReference>
<dbReference type="NCBIfam" id="NF009001">
    <property type="entry name" value="PRK12346.1"/>
    <property type="match status" value="1"/>
</dbReference>
<dbReference type="NCBIfam" id="TIGR00874">
    <property type="entry name" value="talAB"/>
    <property type="match status" value="1"/>
</dbReference>
<dbReference type="PANTHER" id="PTHR10683">
    <property type="entry name" value="TRANSALDOLASE"/>
    <property type="match status" value="1"/>
</dbReference>
<dbReference type="PANTHER" id="PTHR10683:SF18">
    <property type="entry name" value="TRANSALDOLASE"/>
    <property type="match status" value="1"/>
</dbReference>
<dbReference type="Pfam" id="PF00923">
    <property type="entry name" value="TAL_FSA"/>
    <property type="match status" value="1"/>
</dbReference>
<dbReference type="SUPFAM" id="SSF51569">
    <property type="entry name" value="Aldolase"/>
    <property type="match status" value="1"/>
</dbReference>
<dbReference type="PROSITE" id="PS01054">
    <property type="entry name" value="TRANSALDOLASE_1"/>
    <property type="match status" value="1"/>
</dbReference>
<dbReference type="PROSITE" id="PS00958">
    <property type="entry name" value="TRANSALDOLASE_2"/>
    <property type="match status" value="1"/>
</dbReference>